<protein>
    <recommendedName>
        <fullName>Putative uncharacterized protein DDB_G0291422</fullName>
    </recommendedName>
</protein>
<dbReference type="EMBL" id="AAFI02000177">
    <property type="protein sequence ID" value="EAL61695.1"/>
    <property type="molecule type" value="Genomic_DNA"/>
</dbReference>
<dbReference type="RefSeq" id="XP_635200.1">
    <property type="nucleotide sequence ID" value="XM_630108.1"/>
</dbReference>
<dbReference type="SMR" id="Q54EP0"/>
<dbReference type="PaxDb" id="44689-DDB0183883"/>
<dbReference type="EnsemblProtists" id="EAL61695">
    <property type="protein sequence ID" value="EAL61695"/>
    <property type="gene ID" value="DDB_G0291422"/>
</dbReference>
<dbReference type="GeneID" id="8628145"/>
<dbReference type="KEGG" id="ddi:DDB_G0291422"/>
<dbReference type="dictyBase" id="DDB_G0291422"/>
<dbReference type="VEuPathDB" id="AmoebaDB:DDB_G0291422"/>
<dbReference type="HOGENOM" id="CLU_2214939_0_0_1"/>
<dbReference type="InParanoid" id="Q54EP0"/>
<dbReference type="PRO" id="PR:Q54EP0"/>
<dbReference type="Proteomes" id="UP000002195">
    <property type="component" value="Chromosome 6"/>
</dbReference>
<keyword id="KW-0175">Coiled coil</keyword>
<keyword id="KW-1185">Reference proteome</keyword>
<feature type="chain" id="PRO_0000346886" description="Putative uncharacterized protein DDB_G0291422">
    <location>
        <begin position="1"/>
        <end position="107"/>
    </location>
</feature>
<feature type="coiled-coil region" evidence="1">
    <location>
        <begin position="34"/>
        <end position="107"/>
    </location>
</feature>
<accession>Q54EP0</accession>
<gene>
    <name type="ORF">DDB_G0291422</name>
</gene>
<name>Y3883_DICDI</name>
<sequence length="107" mass="12620">MRDNNNNNEKYLIDFLKKVGSMRGSYSGSQIVIFASKDKKDEKIEKKRKIKNLKDKIRSQKRTIELEVENRRLRDRIDGLKSGINELTANLENLKKKSDNQKKDMSY</sequence>
<proteinExistence type="predicted"/>
<reference key="1">
    <citation type="journal article" date="2005" name="Nature">
        <title>The genome of the social amoeba Dictyostelium discoideum.</title>
        <authorList>
            <person name="Eichinger L."/>
            <person name="Pachebat J.A."/>
            <person name="Gloeckner G."/>
            <person name="Rajandream M.A."/>
            <person name="Sucgang R."/>
            <person name="Berriman M."/>
            <person name="Song J."/>
            <person name="Olsen R."/>
            <person name="Szafranski K."/>
            <person name="Xu Q."/>
            <person name="Tunggal B."/>
            <person name="Kummerfeld S."/>
            <person name="Madera M."/>
            <person name="Konfortov B.A."/>
            <person name="Rivero F."/>
            <person name="Bankier A.T."/>
            <person name="Lehmann R."/>
            <person name="Hamlin N."/>
            <person name="Davies R."/>
            <person name="Gaudet P."/>
            <person name="Fey P."/>
            <person name="Pilcher K."/>
            <person name="Chen G."/>
            <person name="Saunders D."/>
            <person name="Sodergren E.J."/>
            <person name="Davis P."/>
            <person name="Kerhornou A."/>
            <person name="Nie X."/>
            <person name="Hall N."/>
            <person name="Anjard C."/>
            <person name="Hemphill L."/>
            <person name="Bason N."/>
            <person name="Farbrother P."/>
            <person name="Desany B."/>
            <person name="Just E."/>
            <person name="Morio T."/>
            <person name="Rost R."/>
            <person name="Churcher C.M."/>
            <person name="Cooper J."/>
            <person name="Haydock S."/>
            <person name="van Driessche N."/>
            <person name="Cronin A."/>
            <person name="Goodhead I."/>
            <person name="Muzny D.M."/>
            <person name="Mourier T."/>
            <person name="Pain A."/>
            <person name="Lu M."/>
            <person name="Harper D."/>
            <person name="Lindsay R."/>
            <person name="Hauser H."/>
            <person name="James K.D."/>
            <person name="Quiles M."/>
            <person name="Madan Babu M."/>
            <person name="Saito T."/>
            <person name="Buchrieser C."/>
            <person name="Wardroper A."/>
            <person name="Felder M."/>
            <person name="Thangavelu M."/>
            <person name="Johnson D."/>
            <person name="Knights A."/>
            <person name="Loulseged H."/>
            <person name="Mungall K.L."/>
            <person name="Oliver K."/>
            <person name="Price C."/>
            <person name="Quail M.A."/>
            <person name="Urushihara H."/>
            <person name="Hernandez J."/>
            <person name="Rabbinowitsch E."/>
            <person name="Steffen D."/>
            <person name="Sanders M."/>
            <person name="Ma J."/>
            <person name="Kohara Y."/>
            <person name="Sharp S."/>
            <person name="Simmonds M.N."/>
            <person name="Spiegler S."/>
            <person name="Tivey A."/>
            <person name="Sugano S."/>
            <person name="White B."/>
            <person name="Walker D."/>
            <person name="Woodward J.R."/>
            <person name="Winckler T."/>
            <person name="Tanaka Y."/>
            <person name="Shaulsky G."/>
            <person name="Schleicher M."/>
            <person name="Weinstock G.M."/>
            <person name="Rosenthal A."/>
            <person name="Cox E.C."/>
            <person name="Chisholm R.L."/>
            <person name="Gibbs R.A."/>
            <person name="Loomis W.F."/>
            <person name="Platzer M."/>
            <person name="Kay R.R."/>
            <person name="Williams J.G."/>
            <person name="Dear P.H."/>
            <person name="Noegel A.A."/>
            <person name="Barrell B.G."/>
            <person name="Kuspa A."/>
        </authorList>
    </citation>
    <scope>NUCLEOTIDE SEQUENCE [LARGE SCALE GENOMIC DNA]</scope>
    <source>
        <strain>AX4</strain>
    </source>
</reference>
<evidence type="ECO:0000255" key="1"/>
<organism>
    <name type="scientific">Dictyostelium discoideum</name>
    <name type="common">Social amoeba</name>
    <dbReference type="NCBI Taxonomy" id="44689"/>
    <lineage>
        <taxon>Eukaryota</taxon>
        <taxon>Amoebozoa</taxon>
        <taxon>Evosea</taxon>
        <taxon>Eumycetozoa</taxon>
        <taxon>Dictyostelia</taxon>
        <taxon>Dictyosteliales</taxon>
        <taxon>Dictyosteliaceae</taxon>
        <taxon>Dictyostelium</taxon>
    </lineage>
</organism>